<keyword id="KW-0963">Cytoplasm</keyword>
<keyword id="KW-0342">GTP-binding</keyword>
<keyword id="KW-0547">Nucleotide-binding</keyword>
<keyword id="KW-0648">Protein biosynthesis</keyword>
<sequence length="520" mass="59602">MNLKQEVESRKTFAIISHPDAGKTTLTEKLLYFSGAIREAGTVKGKKTGKFATSDWMKVEQERGISVTSSVMQFDYDDYKINILDTPGHEDFSEDTYRTLMAVDSAVMVIDCAKGIEPQTLKLFKVCKMRGIPIFTFINKLDRVGKEPFELLDEIEETLNIETYPMNWPIGMGQSFFGIIDRKSKTIEPFRDEENILHLNDDFELEEDHAITNDSDFEQAIEELMLVEEAGEAFDNDALLSGDLTPVFFGSALANFGVQNFLNAYVDFAPMPNARQTKEDVEVSPFDDSFSGFIFKIQANMDPKHRDRIAFMRVVSGAFERGMDVTLQRTNKKQKITRSTSFMADDKETVNHAVAGDIIGLYDTGNYQIGDTLVGGKQTYSFQDLPQFTPEIFMKVSAKNVMKQKHFHKGIEQLVQEGAIQYYKTLHTNQIILGAVGQLQFEVFEHRMKNEYNVDVVMEPVGRKIARWIENEDQITDKMNTSRSILVKDRYDDLVFLFENEFATRWFEEKFPEIKLYSLL</sequence>
<accession>O86490</accession>
<accession>Q5HH66</accession>
<gene>
    <name type="primary">prfC</name>
    <name type="ordered locus">SACOL1025</name>
</gene>
<organism>
    <name type="scientific">Staphylococcus aureus (strain COL)</name>
    <dbReference type="NCBI Taxonomy" id="93062"/>
    <lineage>
        <taxon>Bacteria</taxon>
        <taxon>Bacillati</taxon>
        <taxon>Bacillota</taxon>
        <taxon>Bacilli</taxon>
        <taxon>Bacillales</taxon>
        <taxon>Staphylococcaceae</taxon>
        <taxon>Staphylococcus</taxon>
    </lineage>
</organism>
<evidence type="ECO:0000250" key="1"/>
<evidence type="ECO:0000305" key="2"/>
<reference key="1">
    <citation type="journal article" date="1998" name="Microb. Drug Resist.">
        <title>Molecular cloning and DNA sequencing of the Staphylococcus aureus UDP-N-acetylmuramyl tripeptide synthetase (murE) gene, essential for the optimal expression of methicillin resistance.</title>
        <authorList>
            <person name="Ludovice A.M."/>
            <person name="Wu S.-W."/>
            <person name="de Lencastre H."/>
        </authorList>
    </citation>
    <scope>NUCLEOTIDE SEQUENCE [GENOMIC DNA]</scope>
</reference>
<reference key="2">
    <citation type="journal article" date="2005" name="J. Bacteriol.">
        <title>Insights on evolution of virulence and resistance from the complete genome analysis of an early methicillin-resistant Staphylococcus aureus strain and a biofilm-producing methicillin-resistant Staphylococcus epidermidis strain.</title>
        <authorList>
            <person name="Gill S.R."/>
            <person name="Fouts D.E."/>
            <person name="Archer G.L."/>
            <person name="Mongodin E.F."/>
            <person name="DeBoy R.T."/>
            <person name="Ravel J."/>
            <person name="Paulsen I.T."/>
            <person name="Kolonay J.F."/>
            <person name="Brinkac L.M."/>
            <person name="Beanan M.J."/>
            <person name="Dodson R.J."/>
            <person name="Daugherty S.C."/>
            <person name="Madupu R."/>
            <person name="Angiuoli S.V."/>
            <person name="Durkin A.S."/>
            <person name="Haft D.H."/>
            <person name="Vamathevan J.J."/>
            <person name="Khouri H."/>
            <person name="Utterback T.R."/>
            <person name="Lee C."/>
            <person name="Dimitrov G."/>
            <person name="Jiang L."/>
            <person name="Qin H."/>
            <person name="Weidman J."/>
            <person name="Tran K."/>
            <person name="Kang K.H."/>
            <person name="Hance I.R."/>
            <person name="Nelson K.E."/>
            <person name="Fraser C.M."/>
        </authorList>
    </citation>
    <scope>NUCLEOTIDE SEQUENCE [LARGE SCALE GENOMIC DNA]</scope>
    <source>
        <strain>COL</strain>
    </source>
</reference>
<comment type="function">
    <text evidence="1">Increases the formation of ribosomal termination complexes and stimulates activities of RF-1 and RF-2. It binds guanine nucleotides and has strong preference for UGA stop codons. It may interact directly with the ribosome. The stimulation of RF-1 and RF-2 is significantly reduced by GTP and GDP, but not by GMP (By similarity).</text>
</comment>
<comment type="subcellular location">
    <subcellularLocation>
        <location evidence="1">Cytoplasm</location>
    </subcellularLocation>
</comment>
<comment type="similarity">
    <text evidence="2">Belongs to the TRAFAC class translation factor GTPase superfamily. Classic translation factor GTPase family. PrfC subfamily.</text>
</comment>
<dbReference type="EMBL" id="Y14370">
    <property type="protein sequence ID" value="CAA74739.1"/>
    <property type="molecule type" value="Genomic_DNA"/>
</dbReference>
<dbReference type="EMBL" id="CP000046">
    <property type="protein sequence ID" value="AAW36491.1"/>
    <property type="molecule type" value="Genomic_DNA"/>
</dbReference>
<dbReference type="RefSeq" id="WP_001049959.1">
    <property type="nucleotide sequence ID" value="NZ_JBGOFO010000002.1"/>
</dbReference>
<dbReference type="SMR" id="O86490"/>
<dbReference type="KEGG" id="sac:SACOL1025"/>
<dbReference type="HOGENOM" id="CLU_002794_2_1_9"/>
<dbReference type="Proteomes" id="UP000000530">
    <property type="component" value="Chromosome"/>
</dbReference>
<dbReference type="GO" id="GO:0005829">
    <property type="term" value="C:cytosol"/>
    <property type="evidence" value="ECO:0007669"/>
    <property type="project" value="TreeGrafter"/>
</dbReference>
<dbReference type="GO" id="GO:0005525">
    <property type="term" value="F:GTP binding"/>
    <property type="evidence" value="ECO:0007669"/>
    <property type="project" value="UniProtKB-UniRule"/>
</dbReference>
<dbReference type="GO" id="GO:0003924">
    <property type="term" value="F:GTPase activity"/>
    <property type="evidence" value="ECO:0007669"/>
    <property type="project" value="InterPro"/>
</dbReference>
<dbReference type="GO" id="GO:0016150">
    <property type="term" value="F:translation release factor activity, codon nonspecific"/>
    <property type="evidence" value="ECO:0007669"/>
    <property type="project" value="TreeGrafter"/>
</dbReference>
<dbReference type="GO" id="GO:0016149">
    <property type="term" value="F:translation release factor activity, codon specific"/>
    <property type="evidence" value="ECO:0007669"/>
    <property type="project" value="UniProtKB-UniRule"/>
</dbReference>
<dbReference type="GO" id="GO:0006449">
    <property type="term" value="P:regulation of translational termination"/>
    <property type="evidence" value="ECO:0007669"/>
    <property type="project" value="UniProtKB-UniRule"/>
</dbReference>
<dbReference type="CDD" id="cd04169">
    <property type="entry name" value="RF3"/>
    <property type="match status" value="1"/>
</dbReference>
<dbReference type="CDD" id="cd16259">
    <property type="entry name" value="RF3_III"/>
    <property type="match status" value="1"/>
</dbReference>
<dbReference type="FunFam" id="2.40.30.10:FF:000040">
    <property type="entry name" value="Peptide chain release factor 3"/>
    <property type="match status" value="1"/>
</dbReference>
<dbReference type="FunFam" id="3.30.70.3280:FF:000001">
    <property type="entry name" value="Peptide chain release factor 3"/>
    <property type="match status" value="1"/>
</dbReference>
<dbReference type="FunFam" id="3.40.50.300:FF:000542">
    <property type="entry name" value="Peptide chain release factor 3"/>
    <property type="match status" value="1"/>
</dbReference>
<dbReference type="Gene3D" id="3.40.50.300">
    <property type="entry name" value="P-loop containing nucleotide triphosphate hydrolases"/>
    <property type="match status" value="1"/>
</dbReference>
<dbReference type="Gene3D" id="3.30.70.3280">
    <property type="entry name" value="Peptide chain release factor 3, domain III"/>
    <property type="match status" value="1"/>
</dbReference>
<dbReference type="Gene3D" id="2.40.30.10">
    <property type="entry name" value="Translation factors"/>
    <property type="match status" value="1"/>
</dbReference>
<dbReference type="HAMAP" id="MF_00072">
    <property type="entry name" value="Rel_fac_3"/>
    <property type="match status" value="1"/>
</dbReference>
<dbReference type="InterPro" id="IPR053905">
    <property type="entry name" value="EF-G-like_DII"/>
</dbReference>
<dbReference type="InterPro" id="IPR035647">
    <property type="entry name" value="EFG_III/V"/>
</dbReference>
<dbReference type="InterPro" id="IPR031157">
    <property type="entry name" value="G_TR_CS"/>
</dbReference>
<dbReference type="InterPro" id="IPR027417">
    <property type="entry name" value="P-loop_NTPase"/>
</dbReference>
<dbReference type="InterPro" id="IPR004548">
    <property type="entry name" value="PrfC"/>
</dbReference>
<dbReference type="InterPro" id="IPR032090">
    <property type="entry name" value="RF3_C"/>
</dbReference>
<dbReference type="InterPro" id="IPR038467">
    <property type="entry name" value="RF3_dom_3_sf"/>
</dbReference>
<dbReference type="InterPro" id="IPR041732">
    <property type="entry name" value="RF3_GTP-bd"/>
</dbReference>
<dbReference type="InterPro" id="IPR005225">
    <property type="entry name" value="Small_GTP-bd"/>
</dbReference>
<dbReference type="InterPro" id="IPR000795">
    <property type="entry name" value="T_Tr_GTP-bd_dom"/>
</dbReference>
<dbReference type="InterPro" id="IPR009000">
    <property type="entry name" value="Transl_B-barrel_sf"/>
</dbReference>
<dbReference type="NCBIfam" id="TIGR00503">
    <property type="entry name" value="prfC"/>
    <property type="match status" value="1"/>
</dbReference>
<dbReference type="NCBIfam" id="NF001964">
    <property type="entry name" value="PRK00741.1"/>
    <property type="match status" value="1"/>
</dbReference>
<dbReference type="NCBIfam" id="TIGR00231">
    <property type="entry name" value="small_GTP"/>
    <property type="match status" value="1"/>
</dbReference>
<dbReference type="PANTHER" id="PTHR43556">
    <property type="entry name" value="PEPTIDE CHAIN RELEASE FACTOR RF3"/>
    <property type="match status" value="1"/>
</dbReference>
<dbReference type="PANTHER" id="PTHR43556:SF2">
    <property type="entry name" value="PEPTIDE CHAIN RELEASE FACTOR RF3"/>
    <property type="match status" value="1"/>
</dbReference>
<dbReference type="Pfam" id="PF22042">
    <property type="entry name" value="EF-G_D2"/>
    <property type="match status" value="1"/>
</dbReference>
<dbReference type="Pfam" id="PF00009">
    <property type="entry name" value="GTP_EFTU"/>
    <property type="match status" value="1"/>
</dbReference>
<dbReference type="Pfam" id="PF16658">
    <property type="entry name" value="RF3_C"/>
    <property type="match status" value="1"/>
</dbReference>
<dbReference type="PRINTS" id="PR00315">
    <property type="entry name" value="ELONGATNFCT"/>
</dbReference>
<dbReference type="SUPFAM" id="SSF54980">
    <property type="entry name" value="EF-G C-terminal domain-like"/>
    <property type="match status" value="1"/>
</dbReference>
<dbReference type="SUPFAM" id="SSF52540">
    <property type="entry name" value="P-loop containing nucleoside triphosphate hydrolases"/>
    <property type="match status" value="1"/>
</dbReference>
<dbReference type="SUPFAM" id="SSF50447">
    <property type="entry name" value="Translation proteins"/>
    <property type="match status" value="1"/>
</dbReference>
<dbReference type="PROSITE" id="PS00301">
    <property type="entry name" value="G_TR_1"/>
    <property type="match status" value="1"/>
</dbReference>
<dbReference type="PROSITE" id="PS51722">
    <property type="entry name" value="G_TR_2"/>
    <property type="match status" value="1"/>
</dbReference>
<feature type="chain" id="PRO_0000210962" description="Peptide chain release factor 3">
    <location>
        <begin position="1"/>
        <end position="520"/>
    </location>
</feature>
<feature type="domain" description="tr-type G">
    <location>
        <begin position="8"/>
        <end position="277"/>
    </location>
</feature>
<feature type="binding site" evidence="1">
    <location>
        <begin position="17"/>
        <end position="24"/>
    </location>
    <ligand>
        <name>GTP</name>
        <dbReference type="ChEBI" id="CHEBI:37565"/>
    </ligand>
</feature>
<feature type="binding site" evidence="1">
    <location>
        <begin position="85"/>
        <end position="89"/>
    </location>
    <ligand>
        <name>GTP</name>
        <dbReference type="ChEBI" id="CHEBI:37565"/>
    </ligand>
</feature>
<feature type="binding site" evidence="1">
    <location>
        <begin position="139"/>
        <end position="142"/>
    </location>
    <ligand>
        <name>GTP</name>
        <dbReference type="ChEBI" id="CHEBI:37565"/>
    </ligand>
</feature>
<feature type="sequence conflict" description="In Ref. 1; CAA74739." evidence="2" ref="1">
    <original>TGKFATSD</original>
    <variation>LVNLRQVT</variation>
    <location>
        <begin position="48"/>
        <end position="55"/>
    </location>
</feature>
<feature type="sequence conflict" description="In Ref. 1; CAA74739." evidence="2" ref="1">
    <original>K</original>
    <variation>E</variation>
    <location>
        <position position="80"/>
    </location>
</feature>
<feature type="sequence conflict" description="In Ref. 1; CAA74739." evidence="2" ref="1">
    <original>I</original>
    <variation>V</variation>
    <location>
        <position position="116"/>
    </location>
</feature>
<feature type="sequence conflict" description="In Ref. 1; CAA74739." evidence="2" ref="1">
    <original>Q</original>
    <variation>P</variation>
    <location>
        <position position="119"/>
    </location>
</feature>
<feature type="sequence conflict" description="In Ref. 1; CAA74739." evidence="2" ref="1">
    <original>D</original>
    <variation>N</variation>
    <location>
        <position position="280"/>
    </location>
</feature>
<feature type="sequence conflict" description="In Ref. 1; CAA74739." evidence="2" ref="1">
    <original>GMDVTLQRTNKKQKITRSTSFMADDKET</original>
    <variation>VWMLLCNVLIKSKRSHVQRHLWQTIKKL</variation>
    <location>
        <begin position="322"/>
        <end position="349"/>
    </location>
</feature>
<feature type="sequence conflict" description="In Ref. 1; CAA74739." evidence="2" ref="1">
    <original>W</original>
    <variation>WD</variation>
    <location>
        <position position="468"/>
    </location>
</feature>
<name>RF3_STAAC</name>
<proteinExistence type="inferred from homology"/>
<protein>
    <recommendedName>
        <fullName>Peptide chain release factor 3</fullName>
        <shortName>RF-3</shortName>
        <shortName>RF3</shortName>
    </recommendedName>
</protein>